<sequence>MAYRKLGRTSSQRKAMLRDLTTDLLINESIVTTEARAKEIRKTVEKMITLGKRGDLHARRQAAAFVRNEIASENYDEATDKYTSTTALQKLFSEIAPRYAERNGGYTRILKTEPRRGDAAPMAIIELV</sequence>
<protein>
    <recommendedName>
        <fullName evidence="1">Large ribosomal subunit protein bL17</fullName>
    </recommendedName>
    <alternativeName>
        <fullName evidence="2">50S ribosomal protein L17</fullName>
    </alternativeName>
</protein>
<evidence type="ECO:0000255" key="1">
    <source>
        <dbReference type="HAMAP-Rule" id="MF_01368"/>
    </source>
</evidence>
<evidence type="ECO:0000305" key="2"/>
<accession>Q8CWU8</accession>
<name>RL17_STRR6</name>
<organism>
    <name type="scientific">Streptococcus pneumoniae (strain ATCC BAA-255 / R6)</name>
    <dbReference type="NCBI Taxonomy" id="171101"/>
    <lineage>
        <taxon>Bacteria</taxon>
        <taxon>Bacillati</taxon>
        <taxon>Bacillota</taxon>
        <taxon>Bacilli</taxon>
        <taxon>Lactobacillales</taxon>
        <taxon>Streptococcaceae</taxon>
        <taxon>Streptococcus</taxon>
    </lineage>
</organism>
<proteinExistence type="inferred from homology"/>
<keyword id="KW-1185">Reference proteome</keyword>
<keyword id="KW-0687">Ribonucleoprotein</keyword>
<keyword id="KW-0689">Ribosomal protein</keyword>
<gene>
    <name evidence="1" type="primary">rplQ</name>
    <name type="ordered locus">spr0216</name>
</gene>
<feature type="chain" id="PRO_1000055968" description="Large ribosomal subunit protein bL17">
    <location>
        <begin position="1"/>
        <end position="128"/>
    </location>
</feature>
<reference key="1">
    <citation type="journal article" date="2001" name="J. Bacteriol.">
        <title>Genome of the bacterium Streptococcus pneumoniae strain R6.</title>
        <authorList>
            <person name="Hoskins J."/>
            <person name="Alborn W.E. Jr."/>
            <person name="Arnold J."/>
            <person name="Blaszczak L.C."/>
            <person name="Burgett S."/>
            <person name="DeHoff B.S."/>
            <person name="Estrem S.T."/>
            <person name="Fritz L."/>
            <person name="Fu D.-J."/>
            <person name="Fuller W."/>
            <person name="Geringer C."/>
            <person name="Gilmour R."/>
            <person name="Glass J.S."/>
            <person name="Khoja H."/>
            <person name="Kraft A.R."/>
            <person name="Lagace R.E."/>
            <person name="LeBlanc D.J."/>
            <person name="Lee L.N."/>
            <person name="Lefkowitz E.J."/>
            <person name="Lu J."/>
            <person name="Matsushima P."/>
            <person name="McAhren S.M."/>
            <person name="McHenney M."/>
            <person name="McLeaster K."/>
            <person name="Mundy C.W."/>
            <person name="Nicas T.I."/>
            <person name="Norris F.H."/>
            <person name="O'Gara M."/>
            <person name="Peery R.B."/>
            <person name="Robertson G.T."/>
            <person name="Rockey P."/>
            <person name="Sun P.-M."/>
            <person name="Winkler M.E."/>
            <person name="Yang Y."/>
            <person name="Young-Bellido M."/>
            <person name="Zhao G."/>
            <person name="Zook C.A."/>
            <person name="Baltz R.H."/>
            <person name="Jaskunas S.R."/>
            <person name="Rosteck P.R. Jr."/>
            <person name="Skatrud P.L."/>
            <person name="Glass J.I."/>
        </authorList>
    </citation>
    <scope>NUCLEOTIDE SEQUENCE [LARGE SCALE GENOMIC DNA]</scope>
    <source>
        <strain>ATCC BAA-255 / R6</strain>
    </source>
</reference>
<comment type="subunit">
    <text evidence="1">Part of the 50S ribosomal subunit. Contacts protein L32.</text>
</comment>
<comment type="similarity">
    <text evidence="1">Belongs to the bacterial ribosomal protein bL17 family.</text>
</comment>
<dbReference type="EMBL" id="AE007317">
    <property type="protein sequence ID" value="AAK99020.1"/>
    <property type="molecule type" value="Genomic_DNA"/>
</dbReference>
<dbReference type="PIR" id="H97898">
    <property type="entry name" value="H97898"/>
</dbReference>
<dbReference type="RefSeq" id="NP_357810.1">
    <property type="nucleotide sequence ID" value="NC_003098.1"/>
</dbReference>
<dbReference type="RefSeq" id="WP_000331493.1">
    <property type="nucleotide sequence ID" value="NC_003098.1"/>
</dbReference>
<dbReference type="SMR" id="Q8CWU8"/>
<dbReference type="STRING" id="171101.spr0216"/>
<dbReference type="GeneID" id="93738984"/>
<dbReference type="KEGG" id="spr:spr0216"/>
<dbReference type="PATRIC" id="fig|171101.6.peg.248"/>
<dbReference type="eggNOG" id="COG0203">
    <property type="taxonomic scope" value="Bacteria"/>
</dbReference>
<dbReference type="HOGENOM" id="CLU_074407_2_2_9"/>
<dbReference type="PRO" id="PR:Q8CWU8"/>
<dbReference type="Proteomes" id="UP000000586">
    <property type="component" value="Chromosome"/>
</dbReference>
<dbReference type="GO" id="GO:0022625">
    <property type="term" value="C:cytosolic large ribosomal subunit"/>
    <property type="evidence" value="ECO:0000318"/>
    <property type="project" value="GO_Central"/>
</dbReference>
<dbReference type="GO" id="GO:0003735">
    <property type="term" value="F:structural constituent of ribosome"/>
    <property type="evidence" value="ECO:0000318"/>
    <property type="project" value="GO_Central"/>
</dbReference>
<dbReference type="GO" id="GO:0006412">
    <property type="term" value="P:translation"/>
    <property type="evidence" value="ECO:0007669"/>
    <property type="project" value="UniProtKB-UniRule"/>
</dbReference>
<dbReference type="FunFam" id="3.90.1030.10:FF:000002">
    <property type="entry name" value="50S ribosomal protein L17"/>
    <property type="match status" value="1"/>
</dbReference>
<dbReference type="Gene3D" id="3.90.1030.10">
    <property type="entry name" value="Ribosomal protein L17"/>
    <property type="match status" value="1"/>
</dbReference>
<dbReference type="HAMAP" id="MF_01368">
    <property type="entry name" value="Ribosomal_bL17"/>
    <property type="match status" value="1"/>
</dbReference>
<dbReference type="InterPro" id="IPR000456">
    <property type="entry name" value="Ribosomal_bL17"/>
</dbReference>
<dbReference type="InterPro" id="IPR047859">
    <property type="entry name" value="Ribosomal_bL17_CS"/>
</dbReference>
<dbReference type="InterPro" id="IPR036373">
    <property type="entry name" value="Ribosomal_bL17_sf"/>
</dbReference>
<dbReference type="NCBIfam" id="TIGR00059">
    <property type="entry name" value="L17"/>
    <property type="match status" value="1"/>
</dbReference>
<dbReference type="PANTHER" id="PTHR14413:SF16">
    <property type="entry name" value="LARGE RIBOSOMAL SUBUNIT PROTEIN BL17M"/>
    <property type="match status" value="1"/>
</dbReference>
<dbReference type="PANTHER" id="PTHR14413">
    <property type="entry name" value="RIBOSOMAL PROTEIN L17"/>
    <property type="match status" value="1"/>
</dbReference>
<dbReference type="Pfam" id="PF01196">
    <property type="entry name" value="Ribosomal_L17"/>
    <property type="match status" value="1"/>
</dbReference>
<dbReference type="SUPFAM" id="SSF64263">
    <property type="entry name" value="Prokaryotic ribosomal protein L17"/>
    <property type="match status" value="1"/>
</dbReference>
<dbReference type="PROSITE" id="PS01167">
    <property type="entry name" value="RIBOSOMAL_L17"/>
    <property type="match status" value="1"/>
</dbReference>